<accession>Q8WXF8</accession>
<accession>Q8NBR2</accession>
<accession>Q8NES1</accession>
<accession>Q8TAA8</accession>
<accession>Q96D35</accession>
<gene>
    <name type="primary">DEDD2</name>
    <name type="synonym">FLAME3</name>
    <name type="ORF">PSEC0004</name>
</gene>
<dbReference type="EMBL" id="AF443591">
    <property type="protein sequence ID" value="AAL48220.1"/>
    <property type="molecule type" value="mRNA"/>
</dbReference>
<dbReference type="EMBL" id="AF457575">
    <property type="protein sequence ID" value="AAM10835.1"/>
    <property type="molecule type" value="mRNA"/>
</dbReference>
<dbReference type="EMBL" id="AY125488">
    <property type="protein sequence ID" value="AAM95240.1"/>
    <property type="molecule type" value="mRNA"/>
</dbReference>
<dbReference type="EMBL" id="AK075328">
    <property type="protein sequence ID" value="BAC11551.1"/>
    <property type="molecule type" value="mRNA"/>
</dbReference>
<dbReference type="EMBL" id="BC013372">
    <property type="protein sequence ID" value="AAH13372.2"/>
    <property type="status" value="ALT_FRAME"/>
    <property type="molecule type" value="mRNA"/>
</dbReference>
<dbReference type="EMBL" id="BC027930">
    <property type="protein sequence ID" value="AAH27930.1"/>
    <property type="molecule type" value="mRNA"/>
</dbReference>
<dbReference type="CCDS" id="CCDS12597.1">
    <molecule id="Q8WXF8-1"/>
</dbReference>
<dbReference type="CCDS" id="CCDS59391.1">
    <molecule id="Q8WXF8-2"/>
</dbReference>
<dbReference type="RefSeq" id="NP_001257543.1">
    <molecule id="Q8WXF8-1"/>
    <property type="nucleotide sequence ID" value="NM_001270614.2"/>
</dbReference>
<dbReference type="RefSeq" id="NP_001257544.1">
    <molecule id="Q8WXF8-2"/>
    <property type="nucleotide sequence ID" value="NM_001270615.2"/>
</dbReference>
<dbReference type="RefSeq" id="NP_579874.1">
    <molecule id="Q8WXF8-1"/>
    <property type="nucleotide sequence ID" value="NM_133328.4"/>
</dbReference>
<dbReference type="RefSeq" id="XP_047294269.1">
    <molecule id="Q8WXF8-1"/>
    <property type="nucleotide sequence ID" value="XM_047438313.1"/>
</dbReference>
<dbReference type="RefSeq" id="XP_054176029.1">
    <molecule id="Q8WXF8-1"/>
    <property type="nucleotide sequence ID" value="XM_054320054.1"/>
</dbReference>
<dbReference type="SMR" id="Q8WXF8"/>
<dbReference type="BioGRID" id="127838">
    <property type="interactions" value="17"/>
</dbReference>
<dbReference type="FunCoup" id="Q8WXF8">
    <property type="interactions" value="1017"/>
</dbReference>
<dbReference type="IntAct" id="Q8WXF8">
    <property type="interactions" value="8"/>
</dbReference>
<dbReference type="MINT" id="Q8WXF8"/>
<dbReference type="STRING" id="9606.ENSP00000471512"/>
<dbReference type="iPTMnet" id="Q8WXF8"/>
<dbReference type="PhosphoSitePlus" id="Q8WXF8"/>
<dbReference type="BioMuta" id="DEDD2"/>
<dbReference type="DMDM" id="47116024"/>
<dbReference type="MassIVE" id="Q8WXF8"/>
<dbReference type="PaxDb" id="9606-ENSP00000470082"/>
<dbReference type="PeptideAtlas" id="Q8WXF8"/>
<dbReference type="ProteomicsDB" id="75029">
    <molecule id="Q8WXF8-1"/>
</dbReference>
<dbReference type="ProteomicsDB" id="75030">
    <molecule id="Q8WXF8-2"/>
</dbReference>
<dbReference type="Antibodypedia" id="17411">
    <property type="antibodies" value="201 antibodies from 30 providers"/>
</dbReference>
<dbReference type="DNASU" id="162989"/>
<dbReference type="Ensembl" id="ENST00000336034.8">
    <molecule id="Q8WXF8-2"/>
    <property type="protein sequence ID" value="ENSP00000336972.4"/>
    <property type="gene ID" value="ENSG00000160570.14"/>
</dbReference>
<dbReference type="Ensembl" id="ENST00000595337.5">
    <molecule id="Q8WXF8-1"/>
    <property type="protein sequence ID" value="ENSP00000470082.1"/>
    <property type="gene ID" value="ENSG00000160570.14"/>
</dbReference>
<dbReference type="Ensembl" id="ENST00000596251.6">
    <molecule id="Q8WXF8-1"/>
    <property type="protein sequence ID" value="ENSP00000471512.1"/>
    <property type="gene ID" value="ENSG00000160570.14"/>
</dbReference>
<dbReference type="GeneID" id="162989"/>
<dbReference type="KEGG" id="hsa:162989"/>
<dbReference type="MANE-Select" id="ENST00000596251.6">
    <property type="protein sequence ID" value="ENSP00000471512.1"/>
    <property type="RefSeq nucleotide sequence ID" value="NM_133328.4"/>
    <property type="RefSeq protein sequence ID" value="NP_579874.1"/>
</dbReference>
<dbReference type="UCSC" id="uc002osu.3">
    <molecule id="Q8WXF8-1"/>
    <property type="organism name" value="human"/>
</dbReference>
<dbReference type="AGR" id="HGNC:24450"/>
<dbReference type="CTD" id="162989"/>
<dbReference type="DisGeNET" id="162989"/>
<dbReference type="GeneCards" id="DEDD2"/>
<dbReference type="HGNC" id="HGNC:24450">
    <property type="gene designation" value="DEDD2"/>
</dbReference>
<dbReference type="HPA" id="ENSG00000160570">
    <property type="expression patterns" value="Low tissue specificity"/>
</dbReference>
<dbReference type="neXtProt" id="NX_Q8WXF8"/>
<dbReference type="OpenTargets" id="ENSG00000160570"/>
<dbReference type="PharmGKB" id="PA134912744"/>
<dbReference type="VEuPathDB" id="HostDB:ENSG00000160570"/>
<dbReference type="eggNOG" id="ENOG502QQKR">
    <property type="taxonomic scope" value="Eukaryota"/>
</dbReference>
<dbReference type="GeneTree" id="ENSGT00390000008714"/>
<dbReference type="HOGENOM" id="CLU_053869_0_0_1"/>
<dbReference type="InParanoid" id="Q8WXF8"/>
<dbReference type="OMA" id="GHPETHW"/>
<dbReference type="OrthoDB" id="6422954at2759"/>
<dbReference type="PAN-GO" id="Q8WXF8">
    <property type="GO annotations" value="3 GO annotations based on evolutionary models"/>
</dbReference>
<dbReference type="PhylomeDB" id="Q8WXF8"/>
<dbReference type="TreeFam" id="TF331807"/>
<dbReference type="PathwayCommons" id="Q8WXF8"/>
<dbReference type="SignaLink" id="Q8WXF8"/>
<dbReference type="BioGRID-ORCS" id="162989">
    <property type="hits" value="13 hits in 1164 CRISPR screens"/>
</dbReference>
<dbReference type="CD-CODE" id="91857CE7">
    <property type="entry name" value="Nucleolus"/>
</dbReference>
<dbReference type="ChiTaRS" id="DEDD2">
    <property type="organism name" value="human"/>
</dbReference>
<dbReference type="GenomeRNAi" id="162989"/>
<dbReference type="Pharos" id="Q8WXF8">
    <property type="development level" value="Tbio"/>
</dbReference>
<dbReference type="PRO" id="PR:Q8WXF8"/>
<dbReference type="Proteomes" id="UP000005640">
    <property type="component" value="Chromosome 19"/>
</dbReference>
<dbReference type="RNAct" id="Q8WXF8">
    <property type="molecule type" value="protein"/>
</dbReference>
<dbReference type="Bgee" id="ENSG00000160570">
    <property type="expression patterns" value="Expressed in granulocyte and 184 other cell types or tissues"/>
</dbReference>
<dbReference type="ExpressionAtlas" id="Q8WXF8">
    <property type="expression patterns" value="baseline and differential"/>
</dbReference>
<dbReference type="GO" id="GO:0005730">
    <property type="term" value="C:nucleolus"/>
    <property type="evidence" value="ECO:0000314"/>
    <property type="project" value="UniProtKB"/>
</dbReference>
<dbReference type="GO" id="GO:0005654">
    <property type="term" value="C:nucleoplasm"/>
    <property type="evidence" value="ECO:0000314"/>
    <property type="project" value="HPA"/>
</dbReference>
<dbReference type="GO" id="GO:0003677">
    <property type="term" value="F:DNA binding"/>
    <property type="evidence" value="ECO:0000318"/>
    <property type="project" value="GO_Central"/>
</dbReference>
<dbReference type="GO" id="GO:0030159">
    <property type="term" value="F:signaling receptor complex adaptor activity"/>
    <property type="evidence" value="ECO:0000303"/>
    <property type="project" value="UniProtKB"/>
</dbReference>
<dbReference type="GO" id="GO:0030262">
    <property type="term" value="P:apoptotic nuclear changes"/>
    <property type="evidence" value="ECO:0000314"/>
    <property type="project" value="UniProtKB"/>
</dbReference>
<dbReference type="GO" id="GO:0019725">
    <property type="term" value="P:cellular homeostasis"/>
    <property type="evidence" value="ECO:0000303"/>
    <property type="project" value="UniProtKB"/>
</dbReference>
<dbReference type="GO" id="GO:0008625">
    <property type="term" value="P:extrinsic apoptotic signaling pathway via death domain receptors"/>
    <property type="evidence" value="ECO:0000315"/>
    <property type="project" value="UniProtKB"/>
</dbReference>
<dbReference type="GO" id="GO:0035556">
    <property type="term" value="P:intracellular signal transduction"/>
    <property type="evidence" value="ECO:0000303"/>
    <property type="project" value="UniProtKB"/>
</dbReference>
<dbReference type="GO" id="GO:0045892">
    <property type="term" value="P:negative regulation of DNA-templated transcription"/>
    <property type="evidence" value="ECO:0000303"/>
    <property type="project" value="UniProtKB"/>
</dbReference>
<dbReference type="GO" id="GO:2001238">
    <property type="term" value="P:positive regulation of extrinsic apoptotic signaling pathway"/>
    <property type="evidence" value="ECO:0000315"/>
    <property type="project" value="UniProtKB"/>
</dbReference>
<dbReference type="GO" id="GO:0006396">
    <property type="term" value="P:RNA processing"/>
    <property type="evidence" value="ECO:0000303"/>
    <property type="project" value="UniProtKB"/>
</dbReference>
<dbReference type="GO" id="GO:0016075">
    <property type="term" value="P:rRNA catabolic process"/>
    <property type="evidence" value="ECO:0000303"/>
    <property type="project" value="UniProtKB"/>
</dbReference>
<dbReference type="FunFam" id="1.10.533.10:FF:000023">
    <property type="entry name" value="DNA-binding death effector domain-containing protein 2"/>
    <property type="match status" value="1"/>
</dbReference>
<dbReference type="Gene3D" id="1.10.533.10">
    <property type="entry name" value="Death Domain, Fas"/>
    <property type="match status" value="1"/>
</dbReference>
<dbReference type="InterPro" id="IPR011029">
    <property type="entry name" value="DEATH-like_dom_sf"/>
</dbReference>
<dbReference type="InterPro" id="IPR001875">
    <property type="entry name" value="DED_dom"/>
</dbReference>
<dbReference type="InterPro" id="IPR038856">
    <property type="entry name" value="DEDD/DEDD2"/>
</dbReference>
<dbReference type="InterPro" id="IPR049341">
    <property type="entry name" value="TRADD-like_N"/>
</dbReference>
<dbReference type="PANTHER" id="PTHR15205">
    <property type="entry name" value="DEATH EFFECTOR DOMAIN-CONTAINING PROTEIN"/>
    <property type="match status" value="1"/>
</dbReference>
<dbReference type="PANTHER" id="PTHR15205:SF1">
    <property type="entry name" value="DNA-BINDING DEATH EFFECTOR DOMAIN-CONTAINING PROTEIN 2"/>
    <property type="match status" value="1"/>
</dbReference>
<dbReference type="Pfam" id="PF01335">
    <property type="entry name" value="DED"/>
    <property type="match status" value="1"/>
</dbReference>
<dbReference type="Pfam" id="PF20694">
    <property type="entry name" value="TRADD-like_N"/>
    <property type="match status" value="1"/>
</dbReference>
<dbReference type="SMART" id="SM00031">
    <property type="entry name" value="DED"/>
    <property type="match status" value="1"/>
</dbReference>
<dbReference type="SUPFAM" id="SSF47986">
    <property type="entry name" value="DEATH domain"/>
    <property type="match status" value="1"/>
</dbReference>
<dbReference type="PROSITE" id="PS50168">
    <property type="entry name" value="DED"/>
    <property type="match status" value="1"/>
</dbReference>
<keyword id="KW-0025">Alternative splicing</keyword>
<keyword id="KW-0053">Apoptosis</keyword>
<keyword id="KW-0238">DNA-binding</keyword>
<keyword id="KW-0539">Nucleus</keyword>
<keyword id="KW-1267">Proteomics identification</keyword>
<keyword id="KW-1185">Reference proteome</keyword>
<keyword id="KW-0804">Transcription</keyword>
<keyword id="KW-0805">Transcription regulation</keyword>
<organism>
    <name type="scientific">Homo sapiens</name>
    <name type="common">Human</name>
    <dbReference type="NCBI Taxonomy" id="9606"/>
    <lineage>
        <taxon>Eukaryota</taxon>
        <taxon>Metazoa</taxon>
        <taxon>Chordata</taxon>
        <taxon>Craniata</taxon>
        <taxon>Vertebrata</taxon>
        <taxon>Euteleostomi</taxon>
        <taxon>Mammalia</taxon>
        <taxon>Eutheria</taxon>
        <taxon>Euarchontoglires</taxon>
        <taxon>Primates</taxon>
        <taxon>Haplorrhini</taxon>
        <taxon>Catarrhini</taxon>
        <taxon>Hominidae</taxon>
        <taxon>Homo</taxon>
    </lineage>
</organism>
<protein>
    <recommendedName>
        <fullName>DNA-binding death effector domain-containing protein 2</fullName>
    </recommendedName>
    <alternativeName>
        <fullName>DED-containing protein FLAME-3</fullName>
    </alternativeName>
    <alternativeName>
        <fullName>FADD-like anti-apoptotic molecule 3</fullName>
    </alternativeName>
</protein>
<sequence length="326" mass="36179">MALSGSTPAPCWEEDECLDYYGMLSLHRMFEVVGGQLTECELELLAFLLDEAPGAAGGLARARSGLELLLELERRGQCDESNLRLLGQLLRVLARHDLLPHLARKRRRPVSPERYSYGTSSSSKRTEGSCRRRRQSSSSANSQQGQWETGSPPTKRQRRSRGRPSGGARRRRRGAPAAPQQQSEPARPSSEGKVTCDIRLRVRAEYCEHGPALEQGVASRRPQALARQLDVFGQATAVLRSRDLGSVVCDIKFSELSYLDAFWGDYLSGALLQALRGVFLTEALREAVGREAVRLLVSVDEADYEAGRRRLLLMEEEGGRRPTEAS</sequence>
<name>DEDD2_HUMAN</name>
<evidence type="ECO:0000255" key="1"/>
<evidence type="ECO:0000255" key="2">
    <source>
        <dbReference type="PROSITE-ProRule" id="PRU00065"/>
    </source>
</evidence>
<evidence type="ECO:0000256" key="3">
    <source>
        <dbReference type="SAM" id="MobiDB-lite"/>
    </source>
</evidence>
<evidence type="ECO:0000269" key="4">
    <source>
    </source>
</evidence>
<evidence type="ECO:0000269" key="5">
    <source>
    </source>
</evidence>
<evidence type="ECO:0000269" key="6">
    <source>
    </source>
</evidence>
<evidence type="ECO:0000303" key="7">
    <source>
    </source>
</evidence>
<evidence type="ECO:0000303" key="8">
    <source>
    </source>
</evidence>
<evidence type="ECO:0000305" key="9"/>
<reference key="1">
    <citation type="journal article" date="2002" name="J. Biol. Chem.">
        <title>Identification and characterization of DEDD2, a death effector domain-containing protein.</title>
        <authorList>
            <person name="Roth W."/>
            <person name="Stenner-Liewen F."/>
            <person name="Pawlowski K."/>
            <person name="Godzik A."/>
            <person name="Reed J.C."/>
        </authorList>
    </citation>
    <scope>NUCLEOTIDE SEQUENCE [MRNA] (ISOFORM 1)</scope>
    <scope>TISSUE SPECIFICITY</scope>
    <scope>INTERACTION WITH CASP8</scope>
</reference>
<reference key="2">
    <citation type="journal article" date="2002" name="Cell Death Differ.">
        <title>Death effector domain-containing proteins DEDD and FLAME-3 form nuclear complexes with the TFIIIC102 subunit of human transcription factor IIIC.</title>
        <authorList>
            <person name="Zhan Y."/>
            <person name="Hegde R."/>
            <person name="Srinivasula S.M."/>
            <person name="Fernandes-Alnemri T."/>
            <person name="Alnemri E.S."/>
        </authorList>
    </citation>
    <scope>NUCLEOTIDE SEQUENCE [MRNA] (ISOFORM 1)</scope>
    <scope>TISSUE SPECIFICITY</scope>
    <scope>SUBCELLULAR LOCATION</scope>
    <scope>INTERACTION WITH CASP8 AND GTF3C3</scope>
</reference>
<reference key="3">
    <citation type="journal article" date="2002" name="J. Cell Biol.">
        <title>DEDD regulates degradation of intermediate filaments during apoptosis.</title>
        <authorList>
            <person name="Lee J.C."/>
            <person name="Schickling O."/>
            <person name="Stegh A.H."/>
            <person name="Oshima R.G."/>
            <person name="Dinsdale D."/>
            <person name="Cohen G.M."/>
            <person name="Peter M.E."/>
        </authorList>
    </citation>
    <scope>NUCLEOTIDE SEQUENCE [MRNA] (ISOFORM 2)</scope>
</reference>
<reference key="4">
    <citation type="journal article" date="2005" name="DNA Res.">
        <title>Signal sequence and keyword trap in silico for selection of full-length human cDNAs encoding secretion or membrane proteins from oligo-capped cDNA libraries.</title>
        <authorList>
            <person name="Otsuki T."/>
            <person name="Ota T."/>
            <person name="Nishikawa T."/>
            <person name="Hayashi K."/>
            <person name="Suzuki Y."/>
            <person name="Yamamoto J."/>
            <person name="Wakamatsu A."/>
            <person name="Kimura K."/>
            <person name="Sakamoto K."/>
            <person name="Hatano N."/>
            <person name="Kawai Y."/>
            <person name="Ishii S."/>
            <person name="Saito K."/>
            <person name="Kojima S."/>
            <person name="Sugiyama T."/>
            <person name="Ono T."/>
            <person name="Okano K."/>
            <person name="Yoshikawa Y."/>
            <person name="Aotsuka S."/>
            <person name="Sasaki N."/>
            <person name="Hattori A."/>
            <person name="Okumura K."/>
            <person name="Nagai K."/>
            <person name="Sugano S."/>
            <person name="Isogai T."/>
        </authorList>
    </citation>
    <scope>NUCLEOTIDE SEQUENCE [LARGE SCALE MRNA] (ISOFORM 1)</scope>
    <source>
        <tissue>Teratocarcinoma</tissue>
    </source>
</reference>
<reference key="5">
    <citation type="journal article" date="2004" name="Genome Res.">
        <title>The status, quality, and expansion of the NIH full-length cDNA project: the Mammalian Gene Collection (MGC).</title>
        <authorList>
            <consortium name="The MGC Project Team"/>
        </authorList>
    </citation>
    <scope>NUCLEOTIDE SEQUENCE [LARGE SCALE MRNA] (ISOFORMS 1 AND 2)</scope>
    <source>
        <tissue>Brain</tissue>
        <tissue>Lung</tissue>
    </source>
</reference>
<reference key="6">
    <citation type="journal article" date="2003" name="Oncogene">
        <title>DEDD and DEDD2 associate with caspase-8/10 and signal cell death.</title>
        <authorList>
            <person name="Alcivar A."/>
            <person name="Hu S."/>
            <person name="Tang J."/>
            <person name="Yang X."/>
        </authorList>
    </citation>
    <scope>INTERACTION WITH CASP8 AND CASP10</scope>
</reference>
<comment type="function">
    <text>May play a critical role in death receptor-induced apoptosis and may target CASP8 and CASP10 to the nucleus. May regulate degradation of intermediate filaments during apoptosis. May play a role in the general transcription machinery in the nucleus and might be an important regulator of the activity of GTF3C3.</text>
</comment>
<comment type="subunit">
    <text evidence="4 5 6">Interacts with CASP8, CASP10 and GTF3C3. Homodimerizes and heterodimerizes with DEDD.</text>
</comment>
<comment type="subcellular location">
    <subcellularLocation>
        <location evidence="5">Nucleus</location>
        <location evidence="5">Nucleolus</location>
    </subcellularLocation>
    <text>Nuclear, accumulated in subnuclear structures resembling nucleoli.</text>
</comment>
<comment type="alternative products">
    <event type="alternative splicing"/>
    <isoform>
        <id>Q8WXF8-1</id>
        <name>1</name>
        <sequence type="displayed"/>
    </isoform>
    <isoform>
        <id>Q8WXF8-2</id>
        <name>2</name>
        <sequence type="described" ref="VSP_010312"/>
    </isoform>
</comment>
<comment type="tissue specificity">
    <text evidence="4 5">Expressed in most tissues. High levels were found in liver, kidney, heart, ovary, spleen, testes, skeletal muscle and peripheral blood leukocytes. Expression was absent or low in colon and small intestine. Expression is relatively high in the tumor cell lines chronic myologenous leukemia K-562 and the colorectal adenocarcinoma SW480. Expression is moderate in the cervical carcinoma HeLa, the Burkitt's lymphoma Raji, the lung carcinoma A-549, and the melanoma G-361. In contrast, two leukemia cell lines, HL-60 (promyelocytic leukemia) and MOLT-4 (lymphoblastic leukemia), show relatively low levels.</text>
</comment>
<comment type="domain">
    <text>Interactions with CASP8 and CASP10 are mediated by the DED domain.</text>
</comment>
<comment type="sequence caution" evidence="9">
    <conflict type="frameshift">
        <sequence resource="EMBL-CDS" id="AAH13372"/>
    </conflict>
</comment>
<feature type="chain" id="PRO_0000191277" description="DNA-binding death effector domain-containing protein 2">
    <location>
        <begin position="1"/>
        <end position="326"/>
    </location>
</feature>
<feature type="domain" description="DED" evidence="2">
    <location>
        <begin position="25"/>
        <end position="104"/>
    </location>
</feature>
<feature type="region of interest" description="Disordered" evidence="3">
    <location>
        <begin position="104"/>
        <end position="194"/>
    </location>
</feature>
<feature type="short sequence motif" description="Nuclear localization signal" evidence="1">
    <location>
        <begin position="104"/>
        <end position="109"/>
    </location>
</feature>
<feature type="short sequence motif" description="Bipartite nuclear localization signal" evidence="1">
    <location>
        <begin position="155"/>
        <end position="173"/>
    </location>
</feature>
<feature type="compositionally biased region" description="Low complexity" evidence="3">
    <location>
        <begin position="136"/>
        <end position="146"/>
    </location>
</feature>
<feature type="compositionally biased region" description="Basic residues" evidence="3">
    <location>
        <begin position="155"/>
        <end position="174"/>
    </location>
</feature>
<feature type="compositionally biased region" description="Low complexity" evidence="3">
    <location>
        <begin position="175"/>
        <end position="191"/>
    </location>
</feature>
<feature type="splice variant" id="VSP_010312" description="In isoform 2." evidence="7 8">
    <location>
        <begin position="145"/>
        <end position="149"/>
    </location>
</feature>
<feature type="sequence conflict" description="In Ref. 2; AAM10835." evidence="9" ref="2">
    <original>H</original>
    <variation>N</variation>
    <location>
        <position position="27"/>
    </location>
</feature>
<feature type="sequence conflict" description="In Ref. 2; AAM10835." evidence="9" ref="2">
    <original>A</original>
    <variation>G</variation>
    <location>
        <position position="56"/>
    </location>
</feature>
<feature type="sequence conflict" description="In Ref. 4; BAC11551." evidence="9" ref="4">
    <original>D</original>
    <variation>G</variation>
    <location>
        <position position="79"/>
    </location>
</feature>
<feature type="sequence conflict" description="In Ref. 2; AAM10835." evidence="9" ref="2">
    <original>C</original>
    <variation>R</variation>
    <location>
        <position position="207"/>
    </location>
</feature>
<feature type="sequence conflict" description="In Ref. 5; AAH13372." evidence="9" ref="5">
    <location>
        <position position="230"/>
    </location>
</feature>
<proteinExistence type="evidence at protein level"/>